<evidence type="ECO:0000255" key="1">
    <source>
        <dbReference type="HAMAP-Rule" id="MF_01554"/>
    </source>
</evidence>
<organism>
    <name type="scientific">Staphylococcus epidermidis (strain ATCC 35984 / DSM 28319 / BCRC 17069 / CCUG 31568 / BM 3577 / RP62A)</name>
    <dbReference type="NCBI Taxonomy" id="176279"/>
    <lineage>
        <taxon>Bacteria</taxon>
        <taxon>Bacillati</taxon>
        <taxon>Bacillota</taxon>
        <taxon>Bacilli</taxon>
        <taxon>Bacillales</taxon>
        <taxon>Staphylococcaceae</taxon>
        <taxon>Staphylococcus</taxon>
    </lineage>
</organism>
<reference key="1">
    <citation type="journal article" date="2005" name="J. Bacteriol.">
        <title>Insights on evolution of virulence and resistance from the complete genome analysis of an early methicillin-resistant Staphylococcus aureus strain and a biofilm-producing methicillin-resistant Staphylococcus epidermidis strain.</title>
        <authorList>
            <person name="Gill S.R."/>
            <person name="Fouts D.E."/>
            <person name="Archer G.L."/>
            <person name="Mongodin E.F."/>
            <person name="DeBoy R.T."/>
            <person name="Ravel J."/>
            <person name="Paulsen I.T."/>
            <person name="Kolonay J.F."/>
            <person name="Brinkac L.M."/>
            <person name="Beanan M.J."/>
            <person name="Dodson R.J."/>
            <person name="Daugherty S.C."/>
            <person name="Madupu R."/>
            <person name="Angiuoli S.V."/>
            <person name="Durkin A.S."/>
            <person name="Haft D.H."/>
            <person name="Vamathevan J.J."/>
            <person name="Khouri H."/>
            <person name="Utterback T.R."/>
            <person name="Lee C."/>
            <person name="Dimitrov G."/>
            <person name="Jiang L."/>
            <person name="Qin H."/>
            <person name="Weidman J."/>
            <person name="Tran K."/>
            <person name="Kang K.H."/>
            <person name="Hance I.R."/>
            <person name="Nelson K.E."/>
            <person name="Fraser C.M."/>
        </authorList>
    </citation>
    <scope>NUCLEOTIDE SEQUENCE [LARGE SCALE GENOMIC DNA]</scope>
    <source>
        <strain>ATCC 35984 / DSM 28319 / BCRC 17069 / CCUG 31568 / BM 3577 / RP62A</strain>
    </source>
</reference>
<gene>
    <name evidence="1" type="primary">glmM</name>
    <name type="ordered locus">SERP1762</name>
</gene>
<accession>Q5HM67</accession>
<name>GLMM_STAEQ</name>
<dbReference type="EC" id="5.4.2.10" evidence="1"/>
<dbReference type="EMBL" id="CP000029">
    <property type="protein sequence ID" value="AAW55113.1"/>
    <property type="molecule type" value="Genomic_DNA"/>
</dbReference>
<dbReference type="RefSeq" id="WP_002457133.1">
    <property type="nucleotide sequence ID" value="NC_002976.3"/>
</dbReference>
<dbReference type="SMR" id="Q5HM67"/>
<dbReference type="STRING" id="176279.SERP1762"/>
<dbReference type="GeneID" id="50018151"/>
<dbReference type="KEGG" id="ser:SERP1762"/>
<dbReference type="eggNOG" id="COG1109">
    <property type="taxonomic scope" value="Bacteria"/>
</dbReference>
<dbReference type="HOGENOM" id="CLU_016950_7_0_9"/>
<dbReference type="Proteomes" id="UP000000531">
    <property type="component" value="Chromosome"/>
</dbReference>
<dbReference type="GO" id="GO:0005829">
    <property type="term" value="C:cytosol"/>
    <property type="evidence" value="ECO:0007669"/>
    <property type="project" value="TreeGrafter"/>
</dbReference>
<dbReference type="GO" id="GO:0000287">
    <property type="term" value="F:magnesium ion binding"/>
    <property type="evidence" value="ECO:0007669"/>
    <property type="project" value="UniProtKB-UniRule"/>
</dbReference>
<dbReference type="GO" id="GO:0008966">
    <property type="term" value="F:phosphoglucosamine mutase activity"/>
    <property type="evidence" value="ECO:0007669"/>
    <property type="project" value="UniProtKB-UniRule"/>
</dbReference>
<dbReference type="GO" id="GO:0004615">
    <property type="term" value="F:phosphomannomutase activity"/>
    <property type="evidence" value="ECO:0007669"/>
    <property type="project" value="TreeGrafter"/>
</dbReference>
<dbReference type="GO" id="GO:0005975">
    <property type="term" value="P:carbohydrate metabolic process"/>
    <property type="evidence" value="ECO:0007669"/>
    <property type="project" value="InterPro"/>
</dbReference>
<dbReference type="GO" id="GO:0009252">
    <property type="term" value="P:peptidoglycan biosynthetic process"/>
    <property type="evidence" value="ECO:0007669"/>
    <property type="project" value="TreeGrafter"/>
</dbReference>
<dbReference type="GO" id="GO:0006048">
    <property type="term" value="P:UDP-N-acetylglucosamine biosynthetic process"/>
    <property type="evidence" value="ECO:0007669"/>
    <property type="project" value="TreeGrafter"/>
</dbReference>
<dbReference type="CDD" id="cd05802">
    <property type="entry name" value="GlmM"/>
    <property type="match status" value="1"/>
</dbReference>
<dbReference type="FunFam" id="3.30.310.50:FF:000001">
    <property type="entry name" value="Phosphoglucosamine mutase"/>
    <property type="match status" value="1"/>
</dbReference>
<dbReference type="FunFam" id="3.40.120.10:FF:000001">
    <property type="entry name" value="Phosphoglucosamine mutase"/>
    <property type="match status" value="1"/>
</dbReference>
<dbReference type="FunFam" id="3.40.120.10:FF:000002">
    <property type="entry name" value="Phosphoglucosamine mutase"/>
    <property type="match status" value="1"/>
</dbReference>
<dbReference type="Gene3D" id="3.40.120.10">
    <property type="entry name" value="Alpha-D-Glucose-1,6-Bisphosphate, subunit A, domain 3"/>
    <property type="match status" value="3"/>
</dbReference>
<dbReference type="Gene3D" id="3.30.310.50">
    <property type="entry name" value="Alpha-D-phosphohexomutase, C-terminal domain"/>
    <property type="match status" value="1"/>
</dbReference>
<dbReference type="HAMAP" id="MF_01554_B">
    <property type="entry name" value="GlmM_B"/>
    <property type="match status" value="1"/>
</dbReference>
<dbReference type="InterPro" id="IPR005844">
    <property type="entry name" value="A-D-PHexomutase_a/b/a-I"/>
</dbReference>
<dbReference type="InterPro" id="IPR016055">
    <property type="entry name" value="A-D-PHexomutase_a/b/a-I/II/III"/>
</dbReference>
<dbReference type="InterPro" id="IPR005845">
    <property type="entry name" value="A-D-PHexomutase_a/b/a-II"/>
</dbReference>
<dbReference type="InterPro" id="IPR005846">
    <property type="entry name" value="A-D-PHexomutase_a/b/a-III"/>
</dbReference>
<dbReference type="InterPro" id="IPR005843">
    <property type="entry name" value="A-D-PHexomutase_C"/>
</dbReference>
<dbReference type="InterPro" id="IPR036900">
    <property type="entry name" value="A-D-PHexomutase_C_sf"/>
</dbReference>
<dbReference type="InterPro" id="IPR016066">
    <property type="entry name" value="A-D-PHexomutase_CS"/>
</dbReference>
<dbReference type="InterPro" id="IPR005841">
    <property type="entry name" value="Alpha-D-phosphohexomutase_SF"/>
</dbReference>
<dbReference type="InterPro" id="IPR006352">
    <property type="entry name" value="GlmM_bact"/>
</dbReference>
<dbReference type="InterPro" id="IPR050060">
    <property type="entry name" value="Phosphoglucosamine_mutase"/>
</dbReference>
<dbReference type="NCBIfam" id="TIGR01455">
    <property type="entry name" value="glmM"/>
    <property type="match status" value="1"/>
</dbReference>
<dbReference type="NCBIfam" id="NF008139">
    <property type="entry name" value="PRK10887.1"/>
    <property type="match status" value="1"/>
</dbReference>
<dbReference type="PANTHER" id="PTHR42946:SF1">
    <property type="entry name" value="PHOSPHOGLUCOMUTASE (ALPHA-D-GLUCOSE-1,6-BISPHOSPHATE-DEPENDENT)"/>
    <property type="match status" value="1"/>
</dbReference>
<dbReference type="PANTHER" id="PTHR42946">
    <property type="entry name" value="PHOSPHOHEXOSE MUTASE"/>
    <property type="match status" value="1"/>
</dbReference>
<dbReference type="Pfam" id="PF02878">
    <property type="entry name" value="PGM_PMM_I"/>
    <property type="match status" value="1"/>
</dbReference>
<dbReference type="Pfam" id="PF02879">
    <property type="entry name" value="PGM_PMM_II"/>
    <property type="match status" value="1"/>
</dbReference>
<dbReference type="Pfam" id="PF02880">
    <property type="entry name" value="PGM_PMM_III"/>
    <property type="match status" value="1"/>
</dbReference>
<dbReference type="Pfam" id="PF00408">
    <property type="entry name" value="PGM_PMM_IV"/>
    <property type="match status" value="1"/>
</dbReference>
<dbReference type="PRINTS" id="PR00509">
    <property type="entry name" value="PGMPMM"/>
</dbReference>
<dbReference type="SUPFAM" id="SSF55957">
    <property type="entry name" value="Phosphoglucomutase, C-terminal domain"/>
    <property type="match status" value="1"/>
</dbReference>
<dbReference type="SUPFAM" id="SSF53738">
    <property type="entry name" value="Phosphoglucomutase, first 3 domains"/>
    <property type="match status" value="3"/>
</dbReference>
<dbReference type="PROSITE" id="PS00710">
    <property type="entry name" value="PGM_PMM"/>
    <property type="match status" value="1"/>
</dbReference>
<feature type="chain" id="PRO_0000147966" description="Phosphoglucosamine mutase">
    <location>
        <begin position="1"/>
        <end position="451"/>
    </location>
</feature>
<feature type="active site" description="Phosphoserine intermediate" evidence="1">
    <location>
        <position position="102"/>
    </location>
</feature>
<feature type="binding site" description="via phosphate group" evidence="1">
    <location>
        <position position="102"/>
    </location>
    <ligand>
        <name>Mg(2+)</name>
        <dbReference type="ChEBI" id="CHEBI:18420"/>
    </ligand>
</feature>
<feature type="binding site" evidence="1">
    <location>
        <position position="242"/>
    </location>
    <ligand>
        <name>Mg(2+)</name>
        <dbReference type="ChEBI" id="CHEBI:18420"/>
    </ligand>
</feature>
<feature type="binding site" evidence="1">
    <location>
        <position position="244"/>
    </location>
    <ligand>
        <name>Mg(2+)</name>
        <dbReference type="ChEBI" id="CHEBI:18420"/>
    </ligand>
</feature>
<feature type="binding site" evidence="1">
    <location>
        <position position="246"/>
    </location>
    <ligand>
        <name>Mg(2+)</name>
        <dbReference type="ChEBI" id="CHEBI:18420"/>
    </ligand>
</feature>
<feature type="modified residue" description="Phosphoserine" evidence="1">
    <location>
        <position position="102"/>
    </location>
</feature>
<proteinExistence type="inferred from homology"/>
<protein>
    <recommendedName>
        <fullName evidence="1">Phosphoglucosamine mutase</fullName>
        <ecNumber evidence="1">5.4.2.10</ecNumber>
    </recommendedName>
</protein>
<comment type="function">
    <text evidence="1">Catalyzes the conversion of glucosamine-6-phosphate to glucosamine-1-phosphate.</text>
</comment>
<comment type="catalytic activity">
    <reaction evidence="1">
        <text>alpha-D-glucosamine 1-phosphate = D-glucosamine 6-phosphate</text>
        <dbReference type="Rhea" id="RHEA:23424"/>
        <dbReference type="ChEBI" id="CHEBI:58516"/>
        <dbReference type="ChEBI" id="CHEBI:58725"/>
        <dbReference type="EC" id="5.4.2.10"/>
    </reaction>
</comment>
<comment type="cofactor">
    <cofactor evidence="1">
        <name>Mg(2+)</name>
        <dbReference type="ChEBI" id="CHEBI:18420"/>
    </cofactor>
    <text evidence="1">Binds 1 Mg(2+) ion per subunit.</text>
</comment>
<comment type="PTM">
    <text evidence="1">Activated by phosphorylation.</text>
</comment>
<comment type="similarity">
    <text evidence="1">Belongs to the phosphohexose mutase family.</text>
</comment>
<keyword id="KW-0413">Isomerase</keyword>
<keyword id="KW-0460">Magnesium</keyword>
<keyword id="KW-0479">Metal-binding</keyword>
<keyword id="KW-0597">Phosphoprotein</keyword>
<keyword id="KW-1185">Reference proteome</keyword>
<sequence length="451" mass="49215">MGKYFGTDGVRGVANQELTPELAFKLGRYGGYVLAHNKGEKHPRVLVGRDTRVSGEMLESALIAGLISIGAEVMRLGVISTPGVAYLTKEMEAALGVMISASHNPVADNGIKFFGSDGFKLSDDQENEIEQLLDQTNPDLPRPVGEDIVHYSDYFEGAQKYLSYLKSTVDVNFEGLKIVLDGANGSTSSLAPFLFGDLEADTETIGCNPDGYNINEQCGSTHPEKLAEAVLETESDFGLAFDGDGDRIIAVDENGQIVDGDQIMFIIGQEMYKNQELNGNMIVSTVMSNLGFYKALEKEGIQSNKTKVGDRYVVEEMRRGNYNLGGEQSGHIVLMDYNTTGDGLLTGVQLASVIKMSGKTLSELASQMKKYPQSLINVRVTDKYRVEENIHVQEIMTKVETEMNGEGRILVRPSGTEPLVRVMVEAATDADAERYAQSIADVVEDKMGLDK</sequence>